<keyword id="KW-0378">Hydrolase</keyword>
<keyword id="KW-0464">Manganese</keyword>
<keyword id="KW-0479">Metal-binding</keyword>
<keyword id="KW-0620">Polyamine biosynthesis</keyword>
<keyword id="KW-0661">Putrescine biosynthesis</keyword>
<keyword id="KW-0745">Spermidine biosynthesis</keyword>
<dbReference type="EC" id="3.5.3.11" evidence="1"/>
<dbReference type="EMBL" id="CP001050">
    <property type="protein sequence ID" value="ACF30403.1"/>
    <property type="molecule type" value="Genomic_DNA"/>
</dbReference>
<dbReference type="RefSeq" id="WP_003689368.1">
    <property type="nucleotide sequence ID" value="NC_011035.1"/>
</dbReference>
<dbReference type="SMR" id="B4RP98"/>
<dbReference type="GeneID" id="66753689"/>
<dbReference type="KEGG" id="ngk:NGK_1758"/>
<dbReference type="HOGENOM" id="CLU_039478_0_0_4"/>
<dbReference type="UniPathway" id="UPA00534">
    <property type="reaction ID" value="UER00287"/>
</dbReference>
<dbReference type="Proteomes" id="UP000002564">
    <property type="component" value="Chromosome"/>
</dbReference>
<dbReference type="GO" id="GO:0008783">
    <property type="term" value="F:agmatinase activity"/>
    <property type="evidence" value="ECO:0007669"/>
    <property type="project" value="UniProtKB-UniRule"/>
</dbReference>
<dbReference type="GO" id="GO:0030145">
    <property type="term" value="F:manganese ion binding"/>
    <property type="evidence" value="ECO:0007669"/>
    <property type="project" value="InterPro"/>
</dbReference>
<dbReference type="GO" id="GO:0033389">
    <property type="term" value="P:putrescine biosynthetic process from arginine, via agmatine"/>
    <property type="evidence" value="ECO:0007669"/>
    <property type="project" value="TreeGrafter"/>
</dbReference>
<dbReference type="GO" id="GO:0008295">
    <property type="term" value="P:spermidine biosynthetic process"/>
    <property type="evidence" value="ECO:0007669"/>
    <property type="project" value="UniProtKB-UniRule"/>
</dbReference>
<dbReference type="CDD" id="cd11592">
    <property type="entry name" value="Agmatinase_PAH"/>
    <property type="match status" value="1"/>
</dbReference>
<dbReference type="FunFam" id="3.40.800.10:FF:000001">
    <property type="entry name" value="Agmatinase"/>
    <property type="match status" value="1"/>
</dbReference>
<dbReference type="Gene3D" id="3.40.800.10">
    <property type="entry name" value="Ureohydrolase domain"/>
    <property type="match status" value="1"/>
</dbReference>
<dbReference type="HAMAP" id="MF_01418">
    <property type="entry name" value="SpeB"/>
    <property type="match status" value="1"/>
</dbReference>
<dbReference type="InterPro" id="IPR023694">
    <property type="entry name" value="Agmatinase"/>
</dbReference>
<dbReference type="InterPro" id="IPR005925">
    <property type="entry name" value="Agmatinase-rel"/>
</dbReference>
<dbReference type="InterPro" id="IPR006035">
    <property type="entry name" value="Ureohydrolase"/>
</dbReference>
<dbReference type="InterPro" id="IPR023696">
    <property type="entry name" value="Ureohydrolase_dom_sf"/>
</dbReference>
<dbReference type="InterPro" id="IPR020855">
    <property type="entry name" value="Ureohydrolase_Mn_BS"/>
</dbReference>
<dbReference type="NCBIfam" id="TIGR01230">
    <property type="entry name" value="agmatinase"/>
    <property type="match status" value="1"/>
</dbReference>
<dbReference type="NCBIfam" id="NF002564">
    <property type="entry name" value="PRK02190.1"/>
    <property type="match status" value="1"/>
</dbReference>
<dbReference type="PANTHER" id="PTHR11358">
    <property type="entry name" value="ARGINASE/AGMATINASE"/>
    <property type="match status" value="1"/>
</dbReference>
<dbReference type="PANTHER" id="PTHR11358:SF26">
    <property type="entry name" value="GUANIDINO ACID HYDROLASE, MITOCHONDRIAL"/>
    <property type="match status" value="1"/>
</dbReference>
<dbReference type="Pfam" id="PF00491">
    <property type="entry name" value="Arginase"/>
    <property type="match status" value="1"/>
</dbReference>
<dbReference type="PIRSF" id="PIRSF036979">
    <property type="entry name" value="Arginase"/>
    <property type="match status" value="1"/>
</dbReference>
<dbReference type="SUPFAM" id="SSF52768">
    <property type="entry name" value="Arginase/deacetylase"/>
    <property type="match status" value="1"/>
</dbReference>
<dbReference type="PROSITE" id="PS01053">
    <property type="entry name" value="ARGINASE_1"/>
    <property type="match status" value="1"/>
</dbReference>
<dbReference type="PROSITE" id="PS51409">
    <property type="entry name" value="ARGINASE_2"/>
    <property type="match status" value="1"/>
</dbReference>
<evidence type="ECO:0000255" key="1">
    <source>
        <dbReference type="HAMAP-Rule" id="MF_01418"/>
    </source>
</evidence>
<feature type="chain" id="PRO_1000145617" description="Agmatinase">
    <location>
        <begin position="1"/>
        <end position="307"/>
    </location>
</feature>
<feature type="binding site" evidence="1">
    <location>
        <position position="128"/>
    </location>
    <ligand>
        <name>Mn(2+)</name>
        <dbReference type="ChEBI" id="CHEBI:29035"/>
    </ligand>
</feature>
<feature type="binding site" evidence="1">
    <location>
        <position position="151"/>
    </location>
    <ligand>
        <name>Mn(2+)</name>
        <dbReference type="ChEBI" id="CHEBI:29035"/>
    </ligand>
</feature>
<feature type="binding site" evidence="1">
    <location>
        <position position="153"/>
    </location>
    <ligand>
        <name>Mn(2+)</name>
        <dbReference type="ChEBI" id="CHEBI:29035"/>
    </ligand>
</feature>
<feature type="binding site" evidence="1">
    <location>
        <position position="155"/>
    </location>
    <ligand>
        <name>Mn(2+)</name>
        <dbReference type="ChEBI" id="CHEBI:29035"/>
    </ligand>
</feature>
<feature type="binding site" evidence="1">
    <location>
        <position position="232"/>
    </location>
    <ligand>
        <name>Mn(2+)</name>
        <dbReference type="ChEBI" id="CHEBI:29035"/>
    </ligand>
</feature>
<feature type="binding site" evidence="1">
    <location>
        <position position="234"/>
    </location>
    <ligand>
        <name>Mn(2+)</name>
        <dbReference type="ChEBI" id="CHEBI:29035"/>
    </ligand>
</feature>
<reference key="1">
    <citation type="journal article" date="2008" name="J. Bacteriol.">
        <title>Complete genome sequence of Neisseria gonorrhoeae NCCP11945.</title>
        <authorList>
            <person name="Chung G.T."/>
            <person name="Yoo J.S."/>
            <person name="Oh H.B."/>
            <person name="Lee Y.S."/>
            <person name="Cha S.H."/>
            <person name="Kim S.J."/>
            <person name="Yoo C.K."/>
        </authorList>
    </citation>
    <scope>NUCLEOTIDE SEQUENCE [LARGE SCALE GENOMIC DNA]</scope>
    <source>
        <strain>NCCP11945</strain>
    </source>
</reference>
<accession>B4RP98</accession>
<gene>
    <name evidence="1" type="primary">speB</name>
    <name type="ordered locus">NGK_1758</name>
</gene>
<protein>
    <recommendedName>
        <fullName evidence="1">Agmatinase</fullName>
        <ecNumber evidence="1">3.5.3.11</ecNumber>
    </recommendedName>
    <alternativeName>
        <fullName evidence="1">Agmatine ureohydrolase</fullName>
        <shortName evidence="1">AUH</shortName>
    </alternativeName>
</protein>
<name>SPEB_NEIG2</name>
<comment type="function">
    <text evidence="1">Catalyzes the formation of putrescine from agmatine.</text>
</comment>
<comment type="catalytic activity">
    <reaction evidence="1">
        <text>agmatine + H2O = urea + putrescine</text>
        <dbReference type="Rhea" id="RHEA:13929"/>
        <dbReference type="ChEBI" id="CHEBI:15377"/>
        <dbReference type="ChEBI" id="CHEBI:16199"/>
        <dbReference type="ChEBI" id="CHEBI:58145"/>
        <dbReference type="ChEBI" id="CHEBI:326268"/>
        <dbReference type="EC" id="3.5.3.11"/>
    </reaction>
</comment>
<comment type="cofactor">
    <cofactor evidence="1">
        <name>Mn(2+)</name>
        <dbReference type="ChEBI" id="CHEBI:29035"/>
    </cofactor>
</comment>
<comment type="pathway">
    <text evidence="1">Amine and polyamine biosynthesis; putrescine biosynthesis via agmatine pathway; putrescine from agmatine: step 1/1.</text>
</comment>
<comment type="similarity">
    <text evidence="1">Belongs to the arginase family. Agmatinase subfamily.</text>
</comment>
<proteinExistence type="inferred from homology"/>
<organism>
    <name type="scientific">Neisseria gonorrhoeae (strain NCCP11945)</name>
    <dbReference type="NCBI Taxonomy" id="521006"/>
    <lineage>
        <taxon>Bacteria</taxon>
        <taxon>Pseudomonadati</taxon>
        <taxon>Pseudomonadota</taxon>
        <taxon>Betaproteobacteria</taxon>
        <taxon>Neisseriales</taxon>
        <taxon>Neisseriaceae</taxon>
        <taxon>Neisseria</taxon>
    </lineage>
</organism>
<sequence length="307" mass="33966">MQYSTLAGQTDNSLVSNNFGFLRLPLNFMPYESHADWVITGVPYDMAVSGRSGARFGPEAIRRASVNLAWEHRRFPWTFDVRERLNIIDCGDLVFSFGDSRDFVEKMEAHAGKLLSFGKRCLSLGGDHFITLPLLRAHARYFGKLALIHFDAHTDTYDNGSEYDHGTMFYTAPKEGLIDPSRSVQIGIRTEHSKKLPFTVLSAPKVNEDSVEETVRKIKETVGNMPVYLTFDIDCLDPSFAPGTGTPVCGGLSSDRALKILRGLTDLDIVGMDVVEVAPSYDQSDITALAGATIALEMLYLQGAKKD</sequence>